<reference key="1">
    <citation type="submission" date="2005-11" db="EMBL/GenBank/DDBJ databases">
        <authorList>
            <consortium name="NIH - Mammalian Gene Collection (MGC) project"/>
        </authorList>
    </citation>
    <scope>NUCLEOTIDE SEQUENCE [LARGE SCALE MRNA]</scope>
    <source>
        <strain>Crossbred X Angus</strain>
        <tissue>Liver</tissue>
    </source>
</reference>
<accession>Q32L81</accession>
<comment type="function">
    <text evidence="1">Catalyzes the conversion of phosphatidic acid (PA) to CDP-diacylglycerol (CDP-DAG), an essential intermediate in the synthesis of phosphatidylglycerol, cardiolipin and phosphatidylinositol.</text>
</comment>
<comment type="catalytic activity">
    <reaction evidence="1">
        <text>a 1,2-diacyl-sn-glycero-3-phosphate + CTP + H(+) = a CDP-1,2-diacyl-sn-glycerol + diphosphate</text>
        <dbReference type="Rhea" id="RHEA:16229"/>
        <dbReference type="ChEBI" id="CHEBI:15378"/>
        <dbReference type="ChEBI" id="CHEBI:33019"/>
        <dbReference type="ChEBI" id="CHEBI:37563"/>
        <dbReference type="ChEBI" id="CHEBI:58332"/>
        <dbReference type="ChEBI" id="CHEBI:58608"/>
        <dbReference type="EC" id="2.7.7.41"/>
    </reaction>
    <physiologicalReaction direction="left-to-right" evidence="1">
        <dbReference type="Rhea" id="RHEA:16230"/>
    </physiologicalReaction>
</comment>
<comment type="cofactor">
    <cofactor evidence="2">
        <name>Mg(2+)</name>
        <dbReference type="ChEBI" id="CHEBI:18420"/>
    </cofactor>
</comment>
<comment type="pathway">
    <text evidence="1">Phospholipid metabolism; CDP-diacylglycerol biosynthesis; CDP-diacylglycerol from sn-glycerol 3-phosphate: step 3/3.</text>
</comment>
<comment type="subcellular location">
    <subcellularLocation>
        <location evidence="1">Mitochondrion inner membrane</location>
        <topology evidence="1">Peripheral membrane protein</topology>
        <orientation evidence="2">Matrix side</orientation>
    </subcellularLocation>
</comment>
<comment type="similarity">
    <text evidence="3">Belongs to the TAM41 family.</text>
</comment>
<dbReference type="EC" id="2.7.7.41" evidence="1"/>
<dbReference type="EMBL" id="BC109718">
    <property type="protein sequence ID" value="AAI09719.1"/>
    <property type="molecule type" value="mRNA"/>
</dbReference>
<dbReference type="RefSeq" id="NP_001073242.1">
    <property type="nucleotide sequence ID" value="NM_001079774.1"/>
</dbReference>
<dbReference type="SMR" id="Q32L81"/>
<dbReference type="FunCoup" id="Q32L81">
    <property type="interactions" value="2333"/>
</dbReference>
<dbReference type="STRING" id="9913.ENSBTAP00000004316"/>
<dbReference type="PaxDb" id="9913-ENSBTAP00000004316"/>
<dbReference type="GeneID" id="514330"/>
<dbReference type="KEGG" id="bta:514330"/>
<dbReference type="CTD" id="132001"/>
<dbReference type="eggNOG" id="KOG2986">
    <property type="taxonomic scope" value="Eukaryota"/>
</dbReference>
<dbReference type="HOGENOM" id="CLU_030279_1_2_1"/>
<dbReference type="InParanoid" id="Q32L81"/>
<dbReference type="OrthoDB" id="341477at2759"/>
<dbReference type="UniPathway" id="UPA00557">
    <property type="reaction ID" value="UER00614"/>
</dbReference>
<dbReference type="Proteomes" id="UP000009136">
    <property type="component" value="Unplaced"/>
</dbReference>
<dbReference type="GO" id="GO:0005743">
    <property type="term" value="C:mitochondrial inner membrane"/>
    <property type="evidence" value="ECO:0000250"/>
    <property type="project" value="UniProtKB"/>
</dbReference>
<dbReference type="GO" id="GO:0005739">
    <property type="term" value="C:mitochondrion"/>
    <property type="evidence" value="ECO:0000318"/>
    <property type="project" value="GO_Central"/>
</dbReference>
<dbReference type="GO" id="GO:0004605">
    <property type="term" value="F:phosphatidate cytidylyltransferase activity"/>
    <property type="evidence" value="ECO:0000250"/>
    <property type="project" value="UniProtKB"/>
</dbReference>
<dbReference type="GO" id="GO:0032049">
    <property type="term" value="P:cardiolipin biosynthetic process"/>
    <property type="evidence" value="ECO:0000250"/>
    <property type="project" value="UniProtKB"/>
</dbReference>
<dbReference type="GO" id="GO:0016024">
    <property type="term" value="P:CDP-diacylglycerol biosynthetic process"/>
    <property type="evidence" value="ECO:0000318"/>
    <property type="project" value="GO_Central"/>
</dbReference>
<dbReference type="InterPro" id="IPR015222">
    <property type="entry name" value="Tam41"/>
</dbReference>
<dbReference type="PANTHER" id="PTHR13619">
    <property type="entry name" value="PHOSPHATIDATE CYTIDYLYLTRANSFERASE, MITOCHONDRIAL"/>
    <property type="match status" value="1"/>
</dbReference>
<dbReference type="PANTHER" id="PTHR13619:SF0">
    <property type="entry name" value="PHOSPHATIDATE CYTIDYLYLTRANSFERASE, MITOCHONDRIAL"/>
    <property type="match status" value="1"/>
</dbReference>
<dbReference type="Pfam" id="PF09139">
    <property type="entry name" value="Tam41_Mmp37"/>
    <property type="match status" value="1"/>
</dbReference>
<dbReference type="PIRSF" id="PIRSF028840">
    <property type="entry name" value="Mmp37"/>
    <property type="match status" value="1"/>
</dbReference>
<name>TAM41_BOVIN</name>
<sequence>MALQALQSSGVAFRKILSHFPEELSLAFAYGSGVYRQAGPSSDQKNAMLDFVFTVDDPWHSKNLKRNWNHYSFLKVLGPRIITAVQNNYGAGVYYNTLITCDGRLIKYGVISTSVLIEDLLNWNNLYIAGRLQKPVKIVAMNEDVALRSALDQNLKSAVTAAFLMLPESFSEEDLFTEIAGLSYSGDFRMVVGEDKAKVLNIVKPNMAHFRELYGSILQESPQVVYKAQQGSLEIDKSPEGQFTQLMTLPKTLQQQINHIMDPPGKNRDVEETLLQVAHDPDCGDVVRLGLAAIVRPSSMRQSTKGIFTAGLKKSVVYSSLKLHKMWKGWVRKTS</sequence>
<protein>
    <recommendedName>
        <fullName>Phosphatidate cytidylyltransferase, mitochondrial</fullName>
        <ecNumber evidence="1">2.7.7.41</ecNumber>
    </recommendedName>
    <alternativeName>
        <fullName>CDP-diacylglycerol synthase</fullName>
        <shortName>CDP-DAG synthase</shortName>
    </alternativeName>
    <alternativeName>
        <fullName>Mitochondrial translocator assembly and maintenance protein 41 homolog</fullName>
        <shortName>TAM41</shortName>
    </alternativeName>
</protein>
<keyword id="KW-0444">Lipid biosynthesis</keyword>
<keyword id="KW-0443">Lipid metabolism</keyword>
<keyword id="KW-0460">Magnesium</keyword>
<keyword id="KW-0472">Membrane</keyword>
<keyword id="KW-0496">Mitochondrion</keyword>
<keyword id="KW-0999">Mitochondrion inner membrane</keyword>
<keyword id="KW-0548">Nucleotidyltransferase</keyword>
<keyword id="KW-0594">Phospholipid biosynthesis</keyword>
<keyword id="KW-1208">Phospholipid metabolism</keyword>
<keyword id="KW-1185">Reference proteome</keyword>
<keyword id="KW-0808">Transferase</keyword>
<keyword id="KW-0809">Transit peptide</keyword>
<organism>
    <name type="scientific">Bos taurus</name>
    <name type="common">Bovine</name>
    <dbReference type="NCBI Taxonomy" id="9913"/>
    <lineage>
        <taxon>Eukaryota</taxon>
        <taxon>Metazoa</taxon>
        <taxon>Chordata</taxon>
        <taxon>Craniata</taxon>
        <taxon>Vertebrata</taxon>
        <taxon>Euteleostomi</taxon>
        <taxon>Mammalia</taxon>
        <taxon>Eutheria</taxon>
        <taxon>Laurasiatheria</taxon>
        <taxon>Artiodactyla</taxon>
        <taxon>Ruminantia</taxon>
        <taxon>Pecora</taxon>
        <taxon>Bovidae</taxon>
        <taxon>Bovinae</taxon>
        <taxon>Bos</taxon>
    </lineage>
</organism>
<gene>
    <name type="primary">TAMM41</name>
</gene>
<feature type="chain" id="PRO_0000248353" description="Phosphatidate cytidylyltransferase, mitochondrial">
    <location>
        <begin position="1"/>
        <end position="335"/>
    </location>
</feature>
<evidence type="ECO:0000250" key="1">
    <source>
        <dbReference type="UniProtKB" id="D3ZKT0"/>
    </source>
</evidence>
<evidence type="ECO:0000250" key="2">
    <source>
        <dbReference type="UniProtKB" id="P53230"/>
    </source>
</evidence>
<evidence type="ECO:0000305" key="3"/>
<proteinExistence type="evidence at transcript level"/>